<comment type="function">
    <text evidence="1">Catalyzes a salvage reaction resulting in the formation of AMP, that is energically less costly than de novo synthesis.</text>
</comment>
<comment type="catalytic activity">
    <reaction evidence="1">
        <text>AMP + diphosphate = 5-phospho-alpha-D-ribose 1-diphosphate + adenine</text>
        <dbReference type="Rhea" id="RHEA:16609"/>
        <dbReference type="ChEBI" id="CHEBI:16708"/>
        <dbReference type="ChEBI" id="CHEBI:33019"/>
        <dbReference type="ChEBI" id="CHEBI:58017"/>
        <dbReference type="ChEBI" id="CHEBI:456215"/>
        <dbReference type="EC" id="2.4.2.7"/>
    </reaction>
</comment>
<comment type="pathway">
    <text evidence="1">Purine metabolism; AMP biosynthesis via salvage pathway; AMP from adenine: step 1/1.</text>
</comment>
<comment type="subunit">
    <text evidence="1">Homodimer.</text>
</comment>
<comment type="subcellular location">
    <subcellularLocation>
        <location evidence="1">Cytoplasm</location>
    </subcellularLocation>
</comment>
<comment type="similarity">
    <text evidence="1">Belongs to the purine/pyrimidine phosphoribosyltransferase family.</text>
</comment>
<feature type="chain" id="PRO_0000149424" description="Adenine phosphoribosyltransferase">
    <location>
        <begin position="1"/>
        <end position="191"/>
    </location>
</feature>
<sequence>MSKHAAVESDEHVAERTAEAARQVERLTRWHDDFPTPGVRFADLTPVFADAEGFRSVIESLAACAPDADLVAGVDARGFLLGAGVAATLGTGVLAVRKGGKLPPPVISREYSLEYGSAALEIPGNGVELRGRRVLLLDDVLATGGTLAAAAHLFVEAGAQVVAAAVVLELEFLGGRARQGDYPLTSILRLP</sequence>
<gene>
    <name evidence="1" type="primary">apt</name>
    <name type="ordered locus">NFA_36880</name>
</gene>
<name>APT_NOCFA</name>
<keyword id="KW-0963">Cytoplasm</keyword>
<keyword id="KW-0328">Glycosyltransferase</keyword>
<keyword id="KW-0660">Purine salvage</keyword>
<keyword id="KW-1185">Reference proteome</keyword>
<keyword id="KW-0808">Transferase</keyword>
<evidence type="ECO:0000255" key="1">
    <source>
        <dbReference type="HAMAP-Rule" id="MF_00004"/>
    </source>
</evidence>
<protein>
    <recommendedName>
        <fullName evidence="1">Adenine phosphoribosyltransferase</fullName>
        <shortName evidence="1">APRT</shortName>
        <ecNumber evidence="1">2.4.2.7</ecNumber>
    </recommendedName>
</protein>
<organism>
    <name type="scientific">Nocardia farcinica (strain IFM 10152)</name>
    <dbReference type="NCBI Taxonomy" id="247156"/>
    <lineage>
        <taxon>Bacteria</taxon>
        <taxon>Bacillati</taxon>
        <taxon>Actinomycetota</taxon>
        <taxon>Actinomycetes</taxon>
        <taxon>Mycobacteriales</taxon>
        <taxon>Nocardiaceae</taxon>
        <taxon>Nocardia</taxon>
    </lineage>
</organism>
<dbReference type="EC" id="2.4.2.7" evidence="1"/>
<dbReference type="EMBL" id="AP006618">
    <property type="protein sequence ID" value="BAD58536.1"/>
    <property type="molecule type" value="Genomic_DNA"/>
</dbReference>
<dbReference type="SMR" id="Q5YTF5"/>
<dbReference type="STRING" id="247156.NFA_36880"/>
<dbReference type="KEGG" id="nfa:NFA_36880"/>
<dbReference type="eggNOG" id="COG0503">
    <property type="taxonomic scope" value="Bacteria"/>
</dbReference>
<dbReference type="HOGENOM" id="CLU_063339_3_3_11"/>
<dbReference type="OrthoDB" id="9803963at2"/>
<dbReference type="UniPathway" id="UPA00588">
    <property type="reaction ID" value="UER00646"/>
</dbReference>
<dbReference type="Proteomes" id="UP000006820">
    <property type="component" value="Chromosome"/>
</dbReference>
<dbReference type="GO" id="GO:0005737">
    <property type="term" value="C:cytoplasm"/>
    <property type="evidence" value="ECO:0007669"/>
    <property type="project" value="UniProtKB-SubCell"/>
</dbReference>
<dbReference type="GO" id="GO:0002055">
    <property type="term" value="F:adenine binding"/>
    <property type="evidence" value="ECO:0007669"/>
    <property type="project" value="TreeGrafter"/>
</dbReference>
<dbReference type="GO" id="GO:0003999">
    <property type="term" value="F:adenine phosphoribosyltransferase activity"/>
    <property type="evidence" value="ECO:0007669"/>
    <property type="project" value="UniProtKB-UniRule"/>
</dbReference>
<dbReference type="GO" id="GO:0016208">
    <property type="term" value="F:AMP binding"/>
    <property type="evidence" value="ECO:0007669"/>
    <property type="project" value="TreeGrafter"/>
</dbReference>
<dbReference type="GO" id="GO:0006168">
    <property type="term" value="P:adenine salvage"/>
    <property type="evidence" value="ECO:0007669"/>
    <property type="project" value="InterPro"/>
</dbReference>
<dbReference type="GO" id="GO:0044209">
    <property type="term" value="P:AMP salvage"/>
    <property type="evidence" value="ECO:0007669"/>
    <property type="project" value="UniProtKB-UniRule"/>
</dbReference>
<dbReference type="GO" id="GO:0006166">
    <property type="term" value="P:purine ribonucleoside salvage"/>
    <property type="evidence" value="ECO:0007669"/>
    <property type="project" value="UniProtKB-KW"/>
</dbReference>
<dbReference type="CDD" id="cd06223">
    <property type="entry name" value="PRTases_typeI"/>
    <property type="match status" value="1"/>
</dbReference>
<dbReference type="FunFam" id="3.40.50.2020:FF:000004">
    <property type="entry name" value="Adenine phosphoribosyltransferase"/>
    <property type="match status" value="1"/>
</dbReference>
<dbReference type="Gene3D" id="3.40.50.2020">
    <property type="match status" value="1"/>
</dbReference>
<dbReference type="HAMAP" id="MF_00004">
    <property type="entry name" value="Aden_phosphoribosyltr"/>
    <property type="match status" value="1"/>
</dbReference>
<dbReference type="InterPro" id="IPR005764">
    <property type="entry name" value="Ade_phspho_trans"/>
</dbReference>
<dbReference type="InterPro" id="IPR000836">
    <property type="entry name" value="PRibTrfase_dom"/>
</dbReference>
<dbReference type="InterPro" id="IPR029057">
    <property type="entry name" value="PRTase-like"/>
</dbReference>
<dbReference type="InterPro" id="IPR050054">
    <property type="entry name" value="UPRTase/APRTase"/>
</dbReference>
<dbReference type="NCBIfam" id="NF002636">
    <property type="entry name" value="PRK02304.1-5"/>
    <property type="match status" value="1"/>
</dbReference>
<dbReference type="PANTHER" id="PTHR32315">
    <property type="entry name" value="ADENINE PHOSPHORIBOSYLTRANSFERASE"/>
    <property type="match status" value="1"/>
</dbReference>
<dbReference type="PANTHER" id="PTHR32315:SF3">
    <property type="entry name" value="ADENINE PHOSPHORIBOSYLTRANSFERASE"/>
    <property type="match status" value="1"/>
</dbReference>
<dbReference type="Pfam" id="PF00156">
    <property type="entry name" value="Pribosyltran"/>
    <property type="match status" value="1"/>
</dbReference>
<dbReference type="SUPFAM" id="SSF53271">
    <property type="entry name" value="PRTase-like"/>
    <property type="match status" value="1"/>
</dbReference>
<dbReference type="PROSITE" id="PS00103">
    <property type="entry name" value="PUR_PYR_PR_TRANSFER"/>
    <property type="match status" value="1"/>
</dbReference>
<proteinExistence type="inferred from homology"/>
<reference key="1">
    <citation type="journal article" date="2004" name="Proc. Natl. Acad. Sci. U.S.A.">
        <title>The complete genomic sequence of Nocardia farcinica IFM 10152.</title>
        <authorList>
            <person name="Ishikawa J."/>
            <person name="Yamashita A."/>
            <person name="Mikami Y."/>
            <person name="Hoshino Y."/>
            <person name="Kurita H."/>
            <person name="Hotta K."/>
            <person name="Shiba T."/>
            <person name="Hattori M."/>
        </authorList>
    </citation>
    <scope>NUCLEOTIDE SEQUENCE [LARGE SCALE GENOMIC DNA]</scope>
    <source>
        <strain>IFM 10152</strain>
    </source>
</reference>
<accession>Q5YTF5</accession>